<organism>
    <name type="scientific">Pseudomonas entomophila (strain L48)</name>
    <dbReference type="NCBI Taxonomy" id="384676"/>
    <lineage>
        <taxon>Bacteria</taxon>
        <taxon>Pseudomonadati</taxon>
        <taxon>Pseudomonadota</taxon>
        <taxon>Gammaproteobacteria</taxon>
        <taxon>Pseudomonadales</taxon>
        <taxon>Pseudomonadaceae</taxon>
        <taxon>Pseudomonas</taxon>
    </lineage>
</organism>
<name>OPGG_PSEE4</name>
<sequence>MIVSPCIAPRIPGTRLRKAMLAGVALVGLLSAGQLWAFNLDDVAAKAKDLAGQKYEAPKSNLPPVFRDMKYADYQKIRFLQEKAEWAKDKTPFKLSFYHQGMHFDTPVTINEITANKVEEIKYDPSRFEFGDVPHDADATKNLGYAGFRVLYPINKADKQDEIMTLLGASYFRVVGKGHRYGLSARGLAIDTALPSGEEFPRFREFWIEKPKPKDKHLVIYALLDSPRSTGAYKLTLRPGEDTLVDVKSRVYLRDNVSRLGIAPLTSMYLFGPNQPSKVMNYRPALHDSEGLSIHAGNGEWLWRPLNNPKHLAVSNFSVENPRGFGLLQRQRDFSDYEDLDDEYEKRPSTWIEPKGDWGKGTVDLVEIPTADETNDNIVAFWSPEKLPEVGKPFEYDYRLRWTIKEDQLHSPELGWVKQTLRSTGDVKQSNLIRQADGTVAFLVDFIGPNLATLPADTAVRSQVSVGDNAEVVENNLRYNPETKGWRLTLRLKVQDPKKATEMRAALLRDVPVEAPKPAKDSKQDKAAAKHAHAKAEKAKAEQPAEQPAADAASTNGTPATTEKVLTETWSYQLPADE</sequence>
<evidence type="ECO:0000255" key="1">
    <source>
        <dbReference type="HAMAP-Rule" id="MF_01069"/>
    </source>
</evidence>
<evidence type="ECO:0000256" key="2">
    <source>
        <dbReference type="SAM" id="MobiDB-lite"/>
    </source>
</evidence>
<keyword id="KW-0574">Periplasm</keyword>
<keyword id="KW-0732">Signal</keyword>
<proteinExistence type="inferred from homology"/>
<protein>
    <recommendedName>
        <fullName evidence="1">Glucans biosynthesis protein G</fullName>
    </recommendedName>
</protein>
<comment type="function">
    <text evidence="1">Involved in the biosynthesis of osmoregulated periplasmic glucans (OPGs).</text>
</comment>
<comment type="pathway">
    <text evidence="1">Glycan metabolism; osmoregulated periplasmic glucan (OPG) biosynthesis.</text>
</comment>
<comment type="subcellular location">
    <subcellularLocation>
        <location evidence="1">Periplasm</location>
    </subcellularLocation>
</comment>
<comment type="similarity">
    <text evidence="1">Belongs to the OpgD/OpgG family.</text>
</comment>
<gene>
    <name evidence="1" type="primary">opgG</name>
    <name type="ordered locus">PSEEN5090</name>
</gene>
<dbReference type="EMBL" id="CT573326">
    <property type="protein sequence ID" value="CAK17721.1"/>
    <property type="molecule type" value="Genomic_DNA"/>
</dbReference>
<dbReference type="RefSeq" id="WP_011536081.1">
    <property type="nucleotide sequence ID" value="NC_008027.1"/>
</dbReference>
<dbReference type="SMR" id="Q1I3R5"/>
<dbReference type="STRING" id="384676.PSEEN5090"/>
<dbReference type="GeneID" id="32808026"/>
<dbReference type="KEGG" id="pen:PSEEN5090"/>
<dbReference type="eggNOG" id="COG3131">
    <property type="taxonomic scope" value="Bacteria"/>
</dbReference>
<dbReference type="HOGENOM" id="CLU_023403_2_0_6"/>
<dbReference type="UniPathway" id="UPA00637"/>
<dbReference type="Proteomes" id="UP000000658">
    <property type="component" value="Chromosome"/>
</dbReference>
<dbReference type="GO" id="GO:0030288">
    <property type="term" value="C:outer membrane-bounded periplasmic space"/>
    <property type="evidence" value="ECO:0007669"/>
    <property type="project" value="TreeGrafter"/>
</dbReference>
<dbReference type="GO" id="GO:0030246">
    <property type="term" value="F:carbohydrate binding"/>
    <property type="evidence" value="ECO:0007669"/>
    <property type="project" value="InterPro"/>
</dbReference>
<dbReference type="GO" id="GO:0003824">
    <property type="term" value="F:catalytic activity"/>
    <property type="evidence" value="ECO:0007669"/>
    <property type="project" value="InterPro"/>
</dbReference>
<dbReference type="GO" id="GO:0051274">
    <property type="term" value="P:beta-glucan biosynthetic process"/>
    <property type="evidence" value="ECO:0007669"/>
    <property type="project" value="TreeGrafter"/>
</dbReference>
<dbReference type="FunFam" id="2.70.98.10:FF:000001">
    <property type="entry name" value="Glucans biosynthesis protein G"/>
    <property type="match status" value="1"/>
</dbReference>
<dbReference type="Gene3D" id="2.70.98.10">
    <property type="match status" value="1"/>
</dbReference>
<dbReference type="Gene3D" id="2.60.40.10">
    <property type="entry name" value="Immunoglobulins"/>
    <property type="match status" value="1"/>
</dbReference>
<dbReference type="HAMAP" id="MF_01069">
    <property type="entry name" value="MdoG_OpgG"/>
    <property type="match status" value="1"/>
</dbReference>
<dbReference type="InterPro" id="IPR011013">
    <property type="entry name" value="Gal_mutarotase_sf_dom"/>
</dbReference>
<dbReference type="InterPro" id="IPR014718">
    <property type="entry name" value="GH-type_carb-bd"/>
</dbReference>
<dbReference type="InterPro" id="IPR014438">
    <property type="entry name" value="Glucan_biosyn_MdoG/MdoD"/>
</dbReference>
<dbReference type="InterPro" id="IPR007444">
    <property type="entry name" value="Glucan_biosyn_MdoG_C"/>
</dbReference>
<dbReference type="InterPro" id="IPR013783">
    <property type="entry name" value="Ig-like_fold"/>
</dbReference>
<dbReference type="InterPro" id="IPR014756">
    <property type="entry name" value="Ig_E-set"/>
</dbReference>
<dbReference type="InterPro" id="IPR023704">
    <property type="entry name" value="MdoG_OpgG"/>
</dbReference>
<dbReference type="PANTHER" id="PTHR30504">
    <property type="entry name" value="GLUCANS BIOSYNTHESIS PROTEIN"/>
    <property type="match status" value="1"/>
</dbReference>
<dbReference type="PANTHER" id="PTHR30504:SF4">
    <property type="entry name" value="GLUCANS BIOSYNTHESIS PROTEIN G"/>
    <property type="match status" value="1"/>
</dbReference>
<dbReference type="Pfam" id="PF04349">
    <property type="entry name" value="MdoG"/>
    <property type="match status" value="1"/>
</dbReference>
<dbReference type="PIRSF" id="PIRSF006281">
    <property type="entry name" value="MdoG"/>
    <property type="match status" value="1"/>
</dbReference>
<dbReference type="SUPFAM" id="SSF81296">
    <property type="entry name" value="E set domains"/>
    <property type="match status" value="1"/>
</dbReference>
<dbReference type="SUPFAM" id="SSF74650">
    <property type="entry name" value="Galactose mutarotase-like"/>
    <property type="match status" value="1"/>
</dbReference>
<accession>Q1I3R5</accession>
<feature type="signal peptide" evidence="1">
    <location>
        <begin position="1"/>
        <end position="37"/>
    </location>
</feature>
<feature type="chain" id="PRO_1000064564" description="Glucans biosynthesis protein G">
    <location>
        <begin position="38"/>
        <end position="578"/>
    </location>
</feature>
<feature type="region of interest" description="Disordered" evidence="2">
    <location>
        <begin position="511"/>
        <end position="578"/>
    </location>
</feature>
<feature type="compositionally biased region" description="Basic and acidic residues" evidence="2">
    <location>
        <begin position="517"/>
        <end position="543"/>
    </location>
</feature>
<feature type="compositionally biased region" description="Low complexity" evidence="2">
    <location>
        <begin position="544"/>
        <end position="554"/>
    </location>
</feature>
<reference key="1">
    <citation type="journal article" date="2006" name="Nat. Biotechnol.">
        <title>Complete genome sequence of the entomopathogenic and metabolically versatile soil bacterium Pseudomonas entomophila.</title>
        <authorList>
            <person name="Vodovar N."/>
            <person name="Vallenet D."/>
            <person name="Cruveiller S."/>
            <person name="Rouy Z."/>
            <person name="Barbe V."/>
            <person name="Acosta C."/>
            <person name="Cattolico L."/>
            <person name="Jubin C."/>
            <person name="Lajus A."/>
            <person name="Segurens B."/>
            <person name="Vacherie B."/>
            <person name="Wincker P."/>
            <person name="Weissenbach J."/>
            <person name="Lemaitre B."/>
            <person name="Medigue C."/>
            <person name="Boccard F."/>
        </authorList>
    </citation>
    <scope>NUCLEOTIDE SEQUENCE [LARGE SCALE GENOMIC DNA]</scope>
    <source>
        <strain>L48</strain>
    </source>
</reference>